<proteinExistence type="inferred from homology"/>
<dbReference type="EMBL" id="CP000251">
    <property type="protein sequence ID" value="ABC81744.1"/>
    <property type="molecule type" value="Genomic_DNA"/>
</dbReference>
<dbReference type="RefSeq" id="WP_011421026.1">
    <property type="nucleotide sequence ID" value="NC_007760.1"/>
</dbReference>
<dbReference type="SMR" id="Q2IJB1"/>
<dbReference type="STRING" id="290397.Adeh_1973"/>
<dbReference type="KEGG" id="ade:Adeh_1973"/>
<dbReference type="eggNOG" id="COG0292">
    <property type="taxonomic scope" value="Bacteria"/>
</dbReference>
<dbReference type="HOGENOM" id="CLU_123265_0_1_7"/>
<dbReference type="OrthoDB" id="9808966at2"/>
<dbReference type="Proteomes" id="UP000001935">
    <property type="component" value="Chromosome"/>
</dbReference>
<dbReference type="GO" id="GO:1990904">
    <property type="term" value="C:ribonucleoprotein complex"/>
    <property type="evidence" value="ECO:0007669"/>
    <property type="project" value="UniProtKB-KW"/>
</dbReference>
<dbReference type="GO" id="GO:0005840">
    <property type="term" value="C:ribosome"/>
    <property type="evidence" value="ECO:0007669"/>
    <property type="project" value="UniProtKB-KW"/>
</dbReference>
<dbReference type="GO" id="GO:0019843">
    <property type="term" value="F:rRNA binding"/>
    <property type="evidence" value="ECO:0007669"/>
    <property type="project" value="UniProtKB-UniRule"/>
</dbReference>
<dbReference type="GO" id="GO:0003735">
    <property type="term" value="F:structural constituent of ribosome"/>
    <property type="evidence" value="ECO:0007669"/>
    <property type="project" value="InterPro"/>
</dbReference>
<dbReference type="GO" id="GO:0000027">
    <property type="term" value="P:ribosomal large subunit assembly"/>
    <property type="evidence" value="ECO:0007669"/>
    <property type="project" value="UniProtKB-UniRule"/>
</dbReference>
<dbReference type="GO" id="GO:0006412">
    <property type="term" value="P:translation"/>
    <property type="evidence" value="ECO:0007669"/>
    <property type="project" value="InterPro"/>
</dbReference>
<dbReference type="CDD" id="cd07026">
    <property type="entry name" value="Ribosomal_L20"/>
    <property type="match status" value="1"/>
</dbReference>
<dbReference type="FunFam" id="1.10.1900.20:FF:000001">
    <property type="entry name" value="50S ribosomal protein L20"/>
    <property type="match status" value="1"/>
</dbReference>
<dbReference type="Gene3D" id="6.10.160.10">
    <property type="match status" value="1"/>
</dbReference>
<dbReference type="Gene3D" id="1.10.1900.20">
    <property type="entry name" value="Ribosomal protein L20"/>
    <property type="match status" value="1"/>
</dbReference>
<dbReference type="HAMAP" id="MF_00382">
    <property type="entry name" value="Ribosomal_bL20"/>
    <property type="match status" value="1"/>
</dbReference>
<dbReference type="InterPro" id="IPR005813">
    <property type="entry name" value="Ribosomal_bL20"/>
</dbReference>
<dbReference type="InterPro" id="IPR035566">
    <property type="entry name" value="Ribosomal_protein_bL20_C"/>
</dbReference>
<dbReference type="NCBIfam" id="TIGR01032">
    <property type="entry name" value="rplT_bact"/>
    <property type="match status" value="1"/>
</dbReference>
<dbReference type="PANTHER" id="PTHR10986">
    <property type="entry name" value="39S RIBOSOMAL PROTEIN L20"/>
    <property type="match status" value="1"/>
</dbReference>
<dbReference type="Pfam" id="PF00453">
    <property type="entry name" value="Ribosomal_L20"/>
    <property type="match status" value="1"/>
</dbReference>
<dbReference type="PRINTS" id="PR00062">
    <property type="entry name" value="RIBOSOMALL20"/>
</dbReference>
<dbReference type="SUPFAM" id="SSF74731">
    <property type="entry name" value="Ribosomal protein L20"/>
    <property type="match status" value="1"/>
</dbReference>
<sequence length="114" mass="13153">MRVKKGFKARRRRNRVLKLAKGFRGRRKNCYRRANQAVERALNYSTRDRRLKRREFRALWIVRINAAARQNGTTYSKLVAALRKAGVEIDRKILADLALALPGDFAAIVKTAQA</sequence>
<gene>
    <name evidence="1" type="primary">rplT</name>
    <name type="ordered locus">Adeh_1973</name>
</gene>
<feature type="chain" id="PRO_0000243651" description="Large ribosomal subunit protein bL20">
    <location>
        <begin position="1"/>
        <end position="114"/>
    </location>
</feature>
<evidence type="ECO:0000255" key="1">
    <source>
        <dbReference type="HAMAP-Rule" id="MF_00382"/>
    </source>
</evidence>
<evidence type="ECO:0000305" key="2"/>
<keyword id="KW-1185">Reference proteome</keyword>
<keyword id="KW-0687">Ribonucleoprotein</keyword>
<keyword id="KW-0689">Ribosomal protein</keyword>
<keyword id="KW-0694">RNA-binding</keyword>
<keyword id="KW-0699">rRNA-binding</keyword>
<accession>Q2IJB1</accession>
<name>RL20_ANADE</name>
<protein>
    <recommendedName>
        <fullName evidence="1">Large ribosomal subunit protein bL20</fullName>
    </recommendedName>
    <alternativeName>
        <fullName evidence="2">50S ribosomal protein L20</fullName>
    </alternativeName>
</protein>
<comment type="function">
    <text evidence="1">Binds directly to 23S ribosomal RNA and is necessary for the in vitro assembly process of the 50S ribosomal subunit. It is not involved in the protein synthesizing functions of that subunit.</text>
</comment>
<comment type="similarity">
    <text evidence="1">Belongs to the bacterial ribosomal protein bL20 family.</text>
</comment>
<organism>
    <name type="scientific">Anaeromyxobacter dehalogenans (strain 2CP-C)</name>
    <dbReference type="NCBI Taxonomy" id="290397"/>
    <lineage>
        <taxon>Bacteria</taxon>
        <taxon>Pseudomonadati</taxon>
        <taxon>Myxococcota</taxon>
        <taxon>Myxococcia</taxon>
        <taxon>Myxococcales</taxon>
        <taxon>Cystobacterineae</taxon>
        <taxon>Anaeromyxobacteraceae</taxon>
        <taxon>Anaeromyxobacter</taxon>
    </lineage>
</organism>
<reference key="1">
    <citation type="submission" date="2006-01" db="EMBL/GenBank/DDBJ databases">
        <title>Complete sequence of Anaeromyxobacter dehalogenans 2CP-C.</title>
        <authorList>
            <person name="Copeland A."/>
            <person name="Lucas S."/>
            <person name="Lapidus A."/>
            <person name="Barry K."/>
            <person name="Detter J.C."/>
            <person name="Glavina T."/>
            <person name="Hammon N."/>
            <person name="Israni S."/>
            <person name="Pitluck S."/>
            <person name="Brettin T."/>
            <person name="Bruce D."/>
            <person name="Han C."/>
            <person name="Tapia R."/>
            <person name="Gilna P."/>
            <person name="Kiss H."/>
            <person name="Schmutz J."/>
            <person name="Larimer F."/>
            <person name="Land M."/>
            <person name="Kyrpides N."/>
            <person name="Anderson I."/>
            <person name="Sanford R.A."/>
            <person name="Ritalahti K.M."/>
            <person name="Thomas H.S."/>
            <person name="Kirby J.R."/>
            <person name="Zhulin I.B."/>
            <person name="Loeffler F.E."/>
            <person name="Richardson P."/>
        </authorList>
    </citation>
    <scope>NUCLEOTIDE SEQUENCE [LARGE SCALE GENOMIC DNA]</scope>
    <source>
        <strain>2CP-C</strain>
    </source>
</reference>